<name>S45A4_HUMAN</name>
<comment type="function">
    <text evidence="1">Proton-associated sucrose transporter. May be able to transport also glucose and fructose.</text>
</comment>
<comment type="catalytic activity">
    <reaction evidence="1">
        <text>sucrose(out) + H(+)(out) = sucrose(in) + H(+)(in)</text>
        <dbReference type="Rhea" id="RHEA:72187"/>
        <dbReference type="ChEBI" id="CHEBI:15378"/>
        <dbReference type="ChEBI" id="CHEBI:17992"/>
    </reaction>
</comment>
<comment type="subcellular location">
    <subcellularLocation>
        <location evidence="7">Membrane</location>
        <topology evidence="7">Multi-pass membrane protein</topology>
    </subcellularLocation>
</comment>
<comment type="alternative products">
    <event type="alternative splicing"/>
    <isoform>
        <id>Q5BKX6-1</id>
        <name>1</name>
        <sequence type="displayed"/>
    </isoform>
    <isoform>
        <id>Q5BKX6-2</id>
        <name>2</name>
        <sequence type="described" ref="VSP_033540 VSP_033541"/>
    </isoform>
    <isoform>
        <id>Q5BKX6-3</id>
        <name>3</name>
        <sequence type="described" ref="VSP_033540 VSP_033541 VSP_033542"/>
    </isoform>
</comment>
<comment type="similarity">
    <text evidence="7">Belongs to the glycoside-pentoside-hexuronide (GPH) cation symporter transporter (TC 2.A.2) family.</text>
</comment>
<comment type="sequence caution" evidence="7">
    <conflict type="erroneous initiation">
        <sequence resource="EMBL-CDS" id="AAH90891"/>
    </conflict>
    <text>Extended N-terminus.</text>
</comment>
<accession>Q5BKX6</accession>
<accession>Q6ZRI2</accession>
<accession>Q9ULU3</accession>
<reference key="1">
    <citation type="journal article" date="2004" name="Nat. Genet.">
        <title>Complete sequencing and characterization of 21,243 full-length human cDNAs.</title>
        <authorList>
            <person name="Ota T."/>
            <person name="Suzuki Y."/>
            <person name="Nishikawa T."/>
            <person name="Otsuki T."/>
            <person name="Sugiyama T."/>
            <person name="Irie R."/>
            <person name="Wakamatsu A."/>
            <person name="Hayashi K."/>
            <person name="Sato H."/>
            <person name="Nagai K."/>
            <person name="Kimura K."/>
            <person name="Makita H."/>
            <person name="Sekine M."/>
            <person name="Obayashi M."/>
            <person name="Nishi T."/>
            <person name="Shibahara T."/>
            <person name="Tanaka T."/>
            <person name="Ishii S."/>
            <person name="Yamamoto J."/>
            <person name="Saito K."/>
            <person name="Kawai Y."/>
            <person name="Isono Y."/>
            <person name="Nakamura Y."/>
            <person name="Nagahari K."/>
            <person name="Murakami K."/>
            <person name="Yasuda T."/>
            <person name="Iwayanagi T."/>
            <person name="Wagatsuma M."/>
            <person name="Shiratori A."/>
            <person name="Sudo H."/>
            <person name="Hosoiri T."/>
            <person name="Kaku Y."/>
            <person name="Kodaira H."/>
            <person name="Kondo H."/>
            <person name="Sugawara M."/>
            <person name="Takahashi M."/>
            <person name="Kanda K."/>
            <person name="Yokoi T."/>
            <person name="Furuya T."/>
            <person name="Kikkawa E."/>
            <person name="Omura Y."/>
            <person name="Abe K."/>
            <person name="Kamihara K."/>
            <person name="Katsuta N."/>
            <person name="Sato K."/>
            <person name="Tanikawa M."/>
            <person name="Yamazaki M."/>
            <person name="Ninomiya K."/>
            <person name="Ishibashi T."/>
            <person name="Yamashita H."/>
            <person name="Murakawa K."/>
            <person name="Fujimori K."/>
            <person name="Tanai H."/>
            <person name="Kimata M."/>
            <person name="Watanabe M."/>
            <person name="Hiraoka S."/>
            <person name="Chiba Y."/>
            <person name="Ishida S."/>
            <person name="Ono Y."/>
            <person name="Takiguchi S."/>
            <person name="Watanabe S."/>
            <person name="Yosida M."/>
            <person name="Hotuta T."/>
            <person name="Kusano J."/>
            <person name="Kanehori K."/>
            <person name="Takahashi-Fujii A."/>
            <person name="Hara H."/>
            <person name="Tanase T.-O."/>
            <person name="Nomura Y."/>
            <person name="Togiya S."/>
            <person name="Komai F."/>
            <person name="Hara R."/>
            <person name="Takeuchi K."/>
            <person name="Arita M."/>
            <person name="Imose N."/>
            <person name="Musashino K."/>
            <person name="Yuuki H."/>
            <person name="Oshima A."/>
            <person name="Sasaki N."/>
            <person name="Aotsuka S."/>
            <person name="Yoshikawa Y."/>
            <person name="Matsunawa H."/>
            <person name="Ichihara T."/>
            <person name="Shiohata N."/>
            <person name="Sano S."/>
            <person name="Moriya S."/>
            <person name="Momiyama H."/>
            <person name="Satoh N."/>
            <person name="Takami S."/>
            <person name="Terashima Y."/>
            <person name="Suzuki O."/>
            <person name="Nakagawa S."/>
            <person name="Senoh A."/>
            <person name="Mizoguchi H."/>
            <person name="Goto Y."/>
            <person name="Shimizu F."/>
            <person name="Wakebe H."/>
            <person name="Hishigaki H."/>
            <person name="Watanabe T."/>
            <person name="Sugiyama A."/>
            <person name="Takemoto M."/>
            <person name="Kawakami B."/>
            <person name="Yamazaki M."/>
            <person name="Watanabe K."/>
            <person name="Kumagai A."/>
            <person name="Itakura S."/>
            <person name="Fukuzumi Y."/>
            <person name="Fujimori Y."/>
            <person name="Komiyama M."/>
            <person name="Tashiro H."/>
            <person name="Tanigami A."/>
            <person name="Fujiwara T."/>
            <person name="Ono T."/>
            <person name="Yamada K."/>
            <person name="Fujii Y."/>
            <person name="Ozaki K."/>
            <person name="Hirao M."/>
            <person name="Ohmori Y."/>
            <person name="Kawabata A."/>
            <person name="Hikiji T."/>
            <person name="Kobatake N."/>
            <person name="Inagaki H."/>
            <person name="Ikema Y."/>
            <person name="Okamoto S."/>
            <person name="Okitani R."/>
            <person name="Kawakami T."/>
            <person name="Noguchi S."/>
            <person name="Itoh T."/>
            <person name="Shigeta K."/>
            <person name="Senba T."/>
            <person name="Matsumura K."/>
            <person name="Nakajima Y."/>
            <person name="Mizuno T."/>
            <person name="Morinaga M."/>
            <person name="Sasaki M."/>
            <person name="Togashi T."/>
            <person name="Oyama M."/>
            <person name="Hata H."/>
            <person name="Watanabe M."/>
            <person name="Komatsu T."/>
            <person name="Mizushima-Sugano J."/>
            <person name="Satoh T."/>
            <person name="Shirai Y."/>
            <person name="Takahashi Y."/>
            <person name="Nakagawa K."/>
            <person name="Okumura K."/>
            <person name="Nagase T."/>
            <person name="Nomura N."/>
            <person name="Kikuchi H."/>
            <person name="Masuho Y."/>
            <person name="Yamashita R."/>
            <person name="Nakai K."/>
            <person name="Yada T."/>
            <person name="Nakamura Y."/>
            <person name="Ohara O."/>
            <person name="Isogai T."/>
            <person name="Sugano S."/>
        </authorList>
    </citation>
    <scope>NUCLEOTIDE SEQUENCE [LARGE SCALE MRNA] (ISOFORM 3)</scope>
    <source>
        <tissue>Testis</tissue>
    </source>
</reference>
<reference key="2">
    <citation type="journal article" date="2006" name="Nature">
        <title>DNA sequence and analysis of human chromosome 8.</title>
        <authorList>
            <person name="Nusbaum C."/>
            <person name="Mikkelsen T.S."/>
            <person name="Zody M.C."/>
            <person name="Asakawa S."/>
            <person name="Taudien S."/>
            <person name="Garber M."/>
            <person name="Kodira C.D."/>
            <person name="Schueler M.G."/>
            <person name="Shimizu A."/>
            <person name="Whittaker C.A."/>
            <person name="Chang J.L."/>
            <person name="Cuomo C.A."/>
            <person name="Dewar K."/>
            <person name="FitzGerald M.G."/>
            <person name="Yang X."/>
            <person name="Allen N.R."/>
            <person name="Anderson S."/>
            <person name="Asakawa T."/>
            <person name="Blechschmidt K."/>
            <person name="Bloom T."/>
            <person name="Borowsky M.L."/>
            <person name="Butler J."/>
            <person name="Cook A."/>
            <person name="Corum B."/>
            <person name="DeArellano K."/>
            <person name="DeCaprio D."/>
            <person name="Dooley K.T."/>
            <person name="Dorris L. III"/>
            <person name="Engels R."/>
            <person name="Gloeckner G."/>
            <person name="Hafez N."/>
            <person name="Hagopian D.S."/>
            <person name="Hall J.L."/>
            <person name="Ishikawa S.K."/>
            <person name="Jaffe D.B."/>
            <person name="Kamat A."/>
            <person name="Kudoh J."/>
            <person name="Lehmann R."/>
            <person name="Lokitsang T."/>
            <person name="Macdonald P."/>
            <person name="Major J.E."/>
            <person name="Matthews C.D."/>
            <person name="Mauceli E."/>
            <person name="Menzel U."/>
            <person name="Mihalev A.H."/>
            <person name="Minoshima S."/>
            <person name="Murayama Y."/>
            <person name="Naylor J.W."/>
            <person name="Nicol R."/>
            <person name="Nguyen C."/>
            <person name="O'Leary S.B."/>
            <person name="O'Neill K."/>
            <person name="Parker S.C.J."/>
            <person name="Polley A."/>
            <person name="Raymond C.K."/>
            <person name="Reichwald K."/>
            <person name="Rodriguez J."/>
            <person name="Sasaki T."/>
            <person name="Schilhabel M."/>
            <person name="Siddiqui R."/>
            <person name="Smith C.L."/>
            <person name="Sneddon T.P."/>
            <person name="Talamas J.A."/>
            <person name="Tenzin P."/>
            <person name="Topham K."/>
            <person name="Venkataraman V."/>
            <person name="Wen G."/>
            <person name="Yamazaki S."/>
            <person name="Young S.K."/>
            <person name="Zeng Q."/>
            <person name="Zimmer A.R."/>
            <person name="Rosenthal A."/>
            <person name="Birren B.W."/>
            <person name="Platzer M."/>
            <person name="Shimizu N."/>
            <person name="Lander E.S."/>
        </authorList>
    </citation>
    <scope>NUCLEOTIDE SEQUENCE [LARGE SCALE GENOMIC DNA]</scope>
</reference>
<reference key="3">
    <citation type="journal article" date="2004" name="Genome Res.">
        <title>The status, quality, and expansion of the NIH full-length cDNA project: the Mammalian Gene Collection (MGC).</title>
        <authorList>
            <consortium name="The MGC Project Team"/>
        </authorList>
    </citation>
    <scope>NUCLEOTIDE SEQUENCE [LARGE SCALE MRNA] (ISOFORM 2)</scope>
    <source>
        <tissue>Testis</tissue>
    </source>
</reference>
<reference key="4">
    <citation type="journal article" date="1999" name="DNA Res.">
        <title>Characterization of cDNA clones selected by the GeneMark analysis from size-fractionated cDNA libraries from human brain.</title>
        <authorList>
            <person name="Hirosawa M."/>
            <person name="Nagase T."/>
            <person name="Ishikawa K."/>
            <person name="Kikuno R."/>
            <person name="Nomura N."/>
            <person name="Ohara O."/>
        </authorList>
    </citation>
    <scope>NUCLEOTIDE SEQUENCE [LARGE SCALE MRNA] OF 151-768 (ISOFORMS 1/2)</scope>
    <scope>VARIANT ASP-718</scope>
    <source>
        <tissue>Brain</tissue>
    </source>
</reference>
<reference key="5">
    <citation type="journal article" date="2008" name="Proc. Natl. Acad. Sci. U.S.A.">
        <title>A quantitative atlas of mitotic phosphorylation.</title>
        <authorList>
            <person name="Dephoure N."/>
            <person name="Zhou C."/>
            <person name="Villen J."/>
            <person name="Beausoleil S.A."/>
            <person name="Bakalarski C.E."/>
            <person name="Elledge S.J."/>
            <person name="Gygi S.P."/>
        </authorList>
    </citation>
    <scope>PHOSPHORYLATION [LARGE SCALE ANALYSIS] AT SER-454</scope>
    <scope>IDENTIFICATION BY MASS SPECTROMETRY [LARGE SCALE ANALYSIS]</scope>
    <source>
        <tissue>Cervix carcinoma</tissue>
    </source>
</reference>
<reference key="6">
    <citation type="journal article" date="2013" name="J. Proteome Res.">
        <title>Toward a comprehensive characterization of a human cancer cell phosphoproteome.</title>
        <authorList>
            <person name="Zhou H."/>
            <person name="Di Palma S."/>
            <person name="Preisinger C."/>
            <person name="Peng M."/>
            <person name="Polat A.N."/>
            <person name="Heck A.J."/>
            <person name="Mohammed S."/>
        </authorList>
    </citation>
    <scope>PHOSPHORYLATION [LARGE SCALE ANALYSIS] AT SER-424; SER-454 AND SER-732</scope>
    <scope>IDENTIFICATION BY MASS SPECTROMETRY [LARGE SCALE ANALYSIS]</scope>
    <source>
        <tissue>Erythroleukemia</tissue>
    </source>
</reference>
<feature type="chain" id="PRO_0000333803" description="Solute carrier family 45 member 4">
    <location>
        <begin position="1"/>
        <end position="768"/>
    </location>
</feature>
<feature type="transmembrane region" description="Helical" evidence="2">
    <location>
        <begin position="63"/>
        <end position="83"/>
    </location>
</feature>
<feature type="transmembrane region" description="Helical" evidence="2">
    <location>
        <begin position="86"/>
        <end position="106"/>
    </location>
</feature>
<feature type="transmembrane region" description="Helical" evidence="2">
    <location>
        <begin position="123"/>
        <end position="143"/>
    </location>
</feature>
<feature type="transmembrane region" description="Helical" evidence="2">
    <location>
        <begin position="155"/>
        <end position="175"/>
    </location>
</feature>
<feature type="transmembrane region" description="Helical" evidence="2">
    <location>
        <begin position="196"/>
        <end position="216"/>
    </location>
</feature>
<feature type="transmembrane region" description="Helical" evidence="2">
    <location>
        <begin position="233"/>
        <end position="253"/>
    </location>
</feature>
<feature type="transmembrane region" description="Helical" evidence="2">
    <location>
        <begin position="518"/>
        <end position="538"/>
    </location>
</feature>
<feature type="transmembrane region" description="Helical" evidence="2">
    <location>
        <begin position="560"/>
        <end position="580"/>
    </location>
</feature>
<feature type="transmembrane region" description="Helical" evidence="2">
    <location>
        <begin position="592"/>
        <end position="612"/>
    </location>
</feature>
<feature type="transmembrane region" description="Helical" evidence="2">
    <location>
        <begin position="614"/>
        <end position="634"/>
    </location>
</feature>
<feature type="transmembrane region" description="Helical" evidence="2">
    <location>
        <begin position="666"/>
        <end position="686"/>
    </location>
</feature>
<feature type="transmembrane region" description="Helical" evidence="2">
    <location>
        <begin position="695"/>
        <end position="715"/>
    </location>
</feature>
<feature type="region of interest" description="Disordered" evidence="3">
    <location>
        <begin position="1"/>
        <end position="32"/>
    </location>
</feature>
<feature type="region of interest" description="Disordered" evidence="3">
    <location>
        <begin position="259"/>
        <end position="284"/>
    </location>
</feature>
<feature type="region of interest" description="Disordered" evidence="3">
    <location>
        <begin position="379"/>
        <end position="419"/>
    </location>
</feature>
<feature type="region of interest" description="Disordered" evidence="3">
    <location>
        <begin position="460"/>
        <end position="489"/>
    </location>
</feature>
<feature type="region of interest" description="Disordered" evidence="3">
    <location>
        <begin position="726"/>
        <end position="768"/>
    </location>
</feature>
<feature type="compositionally biased region" description="Low complexity" evidence="3">
    <location>
        <begin position="473"/>
        <end position="482"/>
    </location>
</feature>
<feature type="modified residue" description="Phosphoserine" evidence="10">
    <location>
        <position position="424"/>
    </location>
</feature>
<feature type="modified residue" description="Phosphoserine" evidence="9 10">
    <location>
        <position position="454"/>
    </location>
</feature>
<feature type="modified residue" description="Phosphoserine" evidence="1">
    <location>
        <position position="485"/>
    </location>
</feature>
<feature type="modified residue" description="Phosphoserine" evidence="10">
    <location>
        <position position="732"/>
    </location>
</feature>
<feature type="splice variant" id="VSP_033540" description="In isoform 2 and isoform 3." evidence="5 6">
    <location>
        <begin position="1"/>
        <end position="51"/>
    </location>
</feature>
<feature type="splice variant" id="VSP_033541" description="In isoform 2 and isoform 3." evidence="5 6">
    <original>WVMHGAVMFGREFCYAMETALVTPILLQI</original>
    <variation>MGKASPASGLSRPKTLVSPLRSNQWSLQK</variation>
    <location>
        <begin position="52"/>
        <end position="80"/>
    </location>
</feature>
<feature type="splice variant" id="VSP_033542" description="In isoform 3." evidence="5">
    <original>SVV</original>
    <variation>RLQVLTSVRSRHIGWCRSCWRVFFFMIILEKKFSFPQCGSLRRMTYLLFLSELDTLCPGQPCPWAATAHQSWEEAGPGGLGRRQ</variation>
    <location>
        <begin position="766"/>
        <end position="768"/>
    </location>
</feature>
<feature type="sequence variant" id="VAR_043164" description="In dbSNP:rs753778.">
    <original>P</original>
    <variation>L</variation>
    <location>
        <position position="277"/>
    </location>
</feature>
<feature type="sequence variant" id="VAR_043165" description="In dbSNP:rs3739238." evidence="4">
    <original>N</original>
    <variation>D</variation>
    <location>
        <position position="718"/>
    </location>
</feature>
<feature type="sequence conflict" description="In Ref. 1; BAC87328." evidence="7" ref="1">
    <original>E</original>
    <variation>K</variation>
    <location sequence="Q5BKX6-3">
        <position position="787"/>
    </location>
</feature>
<evidence type="ECO:0000250" key="1">
    <source>
        <dbReference type="UniProtKB" id="Q0P5V9"/>
    </source>
</evidence>
<evidence type="ECO:0000255" key="2"/>
<evidence type="ECO:0000256" key="3">
    <source>
        <dbReference type="SAM" id="MobiDB-lite"/>
    </source>
</evidence>
<evidence type="ECO:0000269" key="4">
    <source>
    </source>
</evidence>
<evidence type="ECO:0000303" key="5">
    <source>
    </source>
</evidence>
<evidence type="ECO:0000303" key="6">
    <source>
    </source>
</evidence>
<evidence type="ECO:0000305" key="7"/>
<evidence type="ECO:0000312" key="8">
    <source>
        <dbReference type="HGNC" id="HGNC:29196"/>
    </source>
</evidence>
<evidence type="ECO:0007744" key="9">
    <source>
    </source>
</evidence>
<evidence type="ECO:0007744" key="10">
    <source>
    </source>
</evidence>
<gene>
    <name evidence="8" type="primary">SLC45A4</name>
    <name type="synonym">KIAA1126</name>
</gene>
<organism>
    <name type="scientific">Homo sapiens</name>
    <name type="common">Human</name>
    <dbReference type="NCBI Taxonomy" id="9606"/>
    <lineage>
        <taxon>Eukaryota</taxon>
        <taxon>Metazoa</taxon>
        <taxon>Chordata</taxon>
        <taxon>Craniata</taxon>
        <taxon>Vertebrata</taxon>
        <taxon>Euteleostomi</taxon>
        <taxon>Mammalia</taxon>
        <taxon>Eutheria</taxon>
        <taxon>Euarchontoglires</taxon>
        <taxon>Primates</taxon>
        <taxon>Haplorrhini</taxon>
        <taxon>Catarrhini</taxon>
        <taxon>Hominidae</taxon>
        <taxon>Homo</taxon>
    </lineage>
</organism>
<protein>
    <recommendedName>
        <fullName>Solute carrier family 45 member 4</fullName>
    </recommendedName>
</protein>
<dbReference type="EMBL" id="AK128212">
    <property type="protein sequence ID" value="BAC87328.1"/>
    <property type="molecule type" value="mRNA"/>
</dbReference>
<dbReference type="EMBL" id="AC011676">
    <property type="status" value="NOT_ANNOTATED_CDS"/>
    <property type="molecule type" value="Genomic_DNA"/>
</dbReference>
<dbReference type="EMBL" id="BC090891">
    <property type="protein sequence ID" value="AAH90891.1"/>
    <property type="status" value="ALT_INIT"/>
    <property type="molecule type" value="mRNA"/>
</dbReference>
<dbReference type="EMBL" id="AB032952">
    <property type="protein sequence ID" value="BAA86440.1"/>
    <property type="molecule type" value="mRNA"/>
</dbReference>
<dbReference type="CCDS" id="CCDS34948.1">
    <molecule id="Q5BKX6-3"/>
</dbReference>
<dbReference type="CCDS" id="CCDS69550.1">
    <molecule id="Q5BKX6-2"/>
</dbReference>
<dbReference type="RefSeq" id="NP_001073900.1">
    <molecule id="Q5BKX6-3"/>
    <property type="nucleotide sequence ID" value="NM_001080431.3"/>
</dbReference>
<dbReference type="RefSeq" id="NP_001273575.1">
    <property type="nucleotide sequence ID" value="NM_001286646.1"/>
</dbReference>
<dbReference type="RefSeq" id="NP_001273577.1">
    <molecule id="Q5BKX6-2"/>
    <property type="nucleotide sequence ID" value="NM_001286648.2"/>
</dbReference>
<dbReference type="RefSeq" id="XP_011515474.2">
    <molecule id="Q5BKX6-1"/>
    <property type="nucleotide sequence ID" value="XM_011517172.3"/>
</dbReference>
<dbReference type="RefSeq" id="XP_047277964.1">
    <molecule id="Q5BKX6-1"/>
    <property type="nucleotide sequence ID" value="XM_047422008.1"/>
</dbReference>
<dbReference type="RefSeq" id="XP_047277965.1">
    <molecule id="Q5BKX6-1"/>
    <property type="nucleotide sequence ID" value="XM_047422009.1"/>
</dbReference>
<dbReference type="RefSeq" id="XP_047277966.1">
    <molecule id="Q5BKX6-1"/>
    <property type="nucleotide sequence ID" value="XM_047422010.1"/>
</dbReference>
<dbReference type="SMR" id="Q5BKX6"/>
<dbReference type="BioGRID" id="121448">
    <property type="interactions" value="12"/>
</dbReference>
<dbReference type="FunCoup" id="Q5BKX6">
    <property type="interactions" value="237"/>
</dbReference>
<dbReference type="IntAct" id="Q5BKX6">
    <property type="interactions" value="10"/>
</dbReference>
<dbReference type="MINT" id="Q5BKX6"/>
<dbReference type="STRING" id="9606.ENSP00000428137"/>
<dbReference type="TCDB" id="2.A.2.4.7">
    <property type="family name" value="the glycoside-pentoside-hexuronide (gph):cation symporter family"/>
</dbReference>
<dbReference type="iPTMnet" id="Q5BKX6"/>
<dbReference type="PhosphoSitePlus" id="Q5BKX6"/>
<dbReference type="BioMuta" id="SLC45A4"/>
<dbReference type="DMDM" id="189046188"/>
<dbReference type="jPOST" id="Q5BKX6"/>
<dbReference type="MassIVE" id="Q5BKX6"/>
<dbReference type="PaxDb" id="9606-ENSP00000428137"/>
<dbReference type="PeptideAtlas" id="Q5BKX6"/>
<dbReference type="ProteomicsDB" id="62705">
    <molecule id="Q5BKX6-1"/>
</dbReference>
<dbReference type="ProteomicsDB" id="62706">
    <molecule id="Q5BKX6-2"/>
</dbReference>
<dbReference type="ProteomicsDB" id="62707">
    <molecule id="Q5BKX6-3"/>
</dbReference>
<dbReference type="Antibodypedia" id="14508">
    <property type="antibodies" value="23 antibodies from 10 providers"/>
</dbReference>
<dbReference type="DNASU" id="57210"/>
<dbReference type="Ensembl" id="ENST00000024061.7">
    <molecule id="Q5BKX6-3"/>
    <property type="protein sequence ID" value="ENSP00000024061.3"/>
    <property type="gene ID" value="ENSG00000022567.10"/>
</dbReference>
<dbReference type="Ensembl" id="ENST00000519067.5">
    <molecule id="Q5BKX6-2"/>
    <property type="protein sequence ID" value="ENSP00000429059.1"/>
    <property type="gene ID" value="ENSG00000022567.10"/>
</dbReference>
<dbReference type="GeneID" id="57210"/>
<dbReference type="KEGG" id="hsa:57210"/>
<dbReference type="UCSC" id="uc003ywc.3">
    <molecule id="Q5BKX6-1"/>
    <property type="organism name" value="human"/>
</dbReference>
<dbReference type="AGR" id="HGNC:29196"/>
<dbReference type="CTD" id="57210"/>
<dbReference type="DisGeNET" id="57210"/>
<dbReference type="GeneCards" id="SLC45A4"/>
<dbReference type="HGNC" id="HGNC:29196">
    <property type="gene designation" value="SLC45A4"/>
</dbReference>
<dbReference type="HPA" id="ENSG00000022567">
    <property type="expression patterns" value="Low tissue specificity"/>
</dbReference>
<dbReference type="MIM" id="619581">
    <property type="type" value="gene"/>
</dbReference>
<dbReference type="neXtProt" id="NX_Q5BKX6"/>
<dbReference type="OpenTargets" id="ENSG00000022567"/>
<dbReference type="VEuPathDB" id="HostDB:ENSG00000022567"/>
<dbReference type="eggNOG" id="KOG0637">
    <property type="taxonomic scope" value="Eukaryota"/>
</dbReference>
<dbReference type="GeneTree" id="ENSGT00950000182914"/>
<dbReference type="InParanoid" id="Q5BKX6"/>
<dbReference type="OrthoDB" id="28755at2759"/>
<dbReference type="PAN-GO" id="Q5BKX6">
    <property type="GO annotations" value="2 GO annotations based on evolutionary models"/>
</dbReference>
<dbReference type="PhylomeDB" id="Q5BKX6"/>
<dbReference type="TreeFam" id="TF325412"/>
<dbReference type="PathwayCommons" id="Q5BKX6"/>
<dbReference type="SignaLink" id="Q5BKX6"/>
<dbReference type="BioGRID-ORCS" id="57210">
    <property type="hits" value="13 hits in 1154 CRISPR screens"/>
</dbReference>
<dbReference type="ChiTaRS" id="SLC45A4">
    <property type="organism name" value="human"/>
</dbReference>
<dbReference type="GenomeRNAi" id="57210"/>
<dbReference type="Pharos" id="Q5BKX6">
    <property type="development level" value="Tdark"/>
</dbReference>
<dbReference type="PRO" id="PR:Q5BKX6"/>
<dbReference type="Proteomes" id="UP000005640">
    <property type="component" value="Chromosome 8"/>
</dbReference>
<dbReference type="RNAct" id="Q5BKX6">
    <property type="molecule type" value="protein"/>
</dbReference>
<dbReference type="Bgee" id="ENSG00000022567">
    <property type="expression patterns" value="Expressed in pancreatic ductal cell and 159 other cell types or tissues"/>
</dbReference>
<dbReference type="ExpressionAtlas" id="Q5BKX6">
    <property type="expression patterns" value="baseline and differential"/>
</dbReference>
<dbReference type="GO" id="GO:0016020">
    <property type="term" value="C:membrane"/>
    <property type="evidence" value="ECO:0000318"/>
    <property type="project" value="GO_Central"/>
</dbReference>
<dbReference type="GO" id="GO:0008506">
    <property type="term" value="F:sucrose:proton symporter activity"/>
    <property type="evidence" value="ECO:0000250"/>
    <property type="project" value="ParkinsonsUK-UCL"/>
</dbReference>
<dbReference type="GO" id="GO:0015770">
    <property type="term" value="P:sucrose transport"/>
    <property type="evidence" value="ECO:0000250"/>
    <property type="project" value="ParkinsonsUK-UCL"/>
</dbReference>
<dbReference type="FunFam" id="1.20.1250.20:FF:000069">
    <property type="entry name" value="Solute carrier family 45 member 4"/>
    <property type="match status" value="1"/>
</dbReference>
<dbReference type="FunFam" id="1.20.1250.20:FF:000328">
    <property type="entry name" value="Solute carrier family 45 member 4"/>
    <property type="match status" value="1"/>
</dbReference>
<dbReference type="Gene3D" id="1.20.1250.20">
    <property type="entry name" value="MFS general substrate transporter like domains"/>
    <property type="match status" value="2"/>
</dbReference>
<dbReference type="InterPro" id="IPR011701">
    <property type="entry name" value="MFS"/>
</dbReference>
<dbReference type="InterPro" id="IPR036259">
    <property type="entry name" value="MFS_trans_sf"/>
</dbReference>
<dbReference type="PANTHER" id="PTHR19432:SF7">
    <property type="entry name" value="SOLUTE CARRIER FAMILY 45 MEMBER 4"/>
    <property type="match status" value="1"/>
</dbReference>
<dbReference type="PANTHER" id="PTHR19432">
    <property type="entry name" value="SUGAR TRANSPORTER"/>
    <property type="match status" value="1"/>
</dbReference>
<dbReference type="Pfam" id="PF07690">
    <property type="entry name" value="MFS_1"/>
    <property type="match status" value="1"/>
</dbReference>
<dbReference type="SUPFAM" id="SSF103473">
    <property type="entry name" value="MFS general substrate transporter"/>
    <property type="match status" value="1"/>
</dbReference>
<keyword id="KW-0025">Alternative splicing</keyword>
<keyword id="KW-0472">Membrane</keyword>
<keyword id="KW-0597">Phosphoprotein</keyword>
<keyword id="KW-1267">Proteomics identification</keyword>
<keyword id="KW-1185">Reference proteome</keyword>
<keyword id="KW-0769">Symport</keyword>
<keyword id="KW-0812">Transmembrane</keyword>
<keyword id="KW-1133">Transmembrane helix</keyword>
<keyword id="KW-0813">Transport</keyword>
<sequence>MKMAPQNADPESMQVQELSVPLPDPQKAGGAEAENCETISEGSIDRIPMRLWVMHGAVMFGREFCYAMETALVTPILLQIGLPEQYYSLTWFLSPILGLIFTPLIGSASDRCTLSWGRRRPFILALCVGVLFGVALFLNGSAIGLALGDVPNRQPIGIVLTVLGVVVLDFSADATEGPIRAYLLDVVDSEEQDMALNIHAFSAGLGGAIGYVLGGLDWTQTFLGSWFRTQNQVLFFFAAIIFTVSVALHLFSIDEEQYSPQQERSAEEPGALDGGEPHGVPAFPDEVQSEHELALDYPDVDIMRSKSDSALHVPDTALDLEPELLFLHDIEPSIFHDASYPATPRSTSQELAKTKLPRLATFLKEAAKEDETLLDNHLNEAKVPNGSGSPTKDALGGYTRVDTKPSATSSSMRRRRHAFRRQASSTFSYYGKLGSHCYRYRRANAVVLIKPSRSMSDLYDMQKRQRQHRHRNQSGATTSSGDTESEEGEGETTVRLLWLSMLKMPRELMRLCLCHLLTWFSVIAEAVFYTDFMGQVIFEGDPKAPSNSTAWQAYNAGVKMGCWGLVIYAATGAICSALLQKYLDNYDLSVRVIYVLGTLGFSVGTAVMAMFPNVYVAMVTISTMGIVSMSISYCPYALLGQYHDIKQYIHHSPGNSKRGFGIDCAILSCQVYISQILVASALGGVVDAVGTVRVIPMVASVGSFLGFLTATFLVIYPNVSEEAKEEQKGLSSPLAGEGRAGGNSEKPTVLKLTRKEGLQGPVETESVV</sequence>
<proteinExistence type="evidence at protein level"/>